<name>RL2_CLOPE</name>
<reference key="1">
    <citation type="journal article" date="2002" name="Proc. Natl. Acad. Sci. U.S.A.">
        <title>Complete genome sequence of Clostridium perfringens, an anaerobic flesh-eater.</title>
        <authorList>
            <person name="Shimizu T."/>
            <person name="Ohtani K."/>
            <person name="Hirakawa H."/>
            <person name="Ohshima K."/>
            <person name="Yamashita A."/>
            <person name="Shiba T."/>
            <person name="Ogasawara N."/>
            <person name="Hattori M."/>
            <person name="Kuhara S."/>
            <person name="Hayashi H."/>
        </authorList>
    </citation>
    <scope>NUCLEOTIDE SEQUENCE [LARGE SCALE GENOMIC DNA]</scope>
    <source>
        <strain>13 / Type A</strain>
    </source>
</reference>
<proteinExistence type="inferred from homology"/>
<feature type="chain" id="PRO_0000129552" description="Large ribosomal subunit protein uL2">
    <location>
        <begin position="1"/>
        <end position="277"/>
    </location>
</feature>
<feature type="region of interest" description="Disordered" evidence="2">
    <location>
        <begin position="222"/>
        <end position="258"/>
    </location>
</feature>
<protein>
    <recommendedName>
        <fullName evidence="1">Large ribosomal subunit protein uL2</fullName>
    </recommendedName>
    <alternativeName>
        <fullName evidence="3">50S ribosomal protein L2</fullName>
    </alternativeName>
</protein>
<sequence length="277" mass="30365">MALKKFNPTTPSRRQMTMPTFEEVTTNAPEKSLLVSLKKTGGRNAQGKITVRHHGGGAKRKYRIIDFKRNKDGIPAKVATVEYDPNRSAYIALVVYADGEKRYILAPVGLKVGDTVVSGPEADIKPGNALQLKHMPVGTFVHNIELQAGKGGQMVRSAGTSAQLMAKEGNYATLRLPSGEMRYVRIECKATVGTVSNTTHEIVNIGKAGRKRHMGWRPTVRGSVMNPCDHPHGGGEGRSPIGRPSPVTPWGKPALGYKTRKNKKYSDRFIIKRRNAK</sequence>
<gene>
    <name evidence="1" type="primary">rplB</name>
    <name type="ordered locus">CPE2402</name>
</gene>
<evidence type="ECO:0000255" key="1">
    <source>
        <dbReference type="HAMAP-Rule" id="MF_01320"/>
    </source>
</evidence>
<evidence type="ECO:0000256" key="2">
    <source>
        <dbReference type="SAM" id="MobiDB-lite"/>
    </source>
</evidence>
<evidence type="ECO:0000305" key="3"/>
<organism>
    <name type="scientific">Clostridium perfringens (strain 13 / Type A)</name>
    <dbReference type="NCBI Taxonomy" id="195102"/>
    <lineage>
        <taxon>Bacteria</taxon>
        <taxon>Bacillati</taxon>
        <taxon>Bacillota</taxon>
        <taxon>Clostridia</taxon>
        <taxon>Eubacteriales</taxon>
        <taxon>Clostridiaceae</taxon>
        <taxon>Clostridium</taxon>
    </lineage>
</organism>
<keyword id="KW-1185">Reference proteome</keyword>
<keyword id="KW-0687">Ribonucleoprotein</keyword>
<keyword id="KW-0689">Ribosomal protein</keyword>
<keyword id="KW-0694">RNA-binding</keyword>
<keyword id="KW-0699">rRNA-binding</keyword>
<comment type="function">
    <text evidence="1">One of the primary rRNA binding proteins. Required for association of the 30S and 50S subunits to form the 70S ribosome, for tRNA binding and peptide bond formation. It has been suggested to have peptidyltransferase activity; this is somewhat controversial. Makes several contacts with the 16S rRNA in the 70S ribosome.</text>
</comment>
<comment type="subunit">
    <text evidence="1">Part of the 50S ribosomal subunit. Forms a bridge to the 30S subunit in the 70S ribosome.</text>
</comment>
<comment type="similarity">
    <text evidence="1">Belongs to the universal ribosomal protein uL2 family.</text>
</comment>
<accession>Q8XHS6</accession>
<dbReference type="EMBL" id="BA000016">
    <property type="protein sequence ID" value="BAB82108.1"/>
    <property type="molecule type" value="Genomic_DNA"/>
</dbReference>
<dbReference type="RefSeq" id="WP_003460473.1">
    <property type="nucleotide sequence ID" value="NC_003366.1"/>
</dbReference>
<dbReference type="SMR" id="Q8XHS6"/>
<dbReference type="STRING" id="195102.gene:10491719"/>
<dbReference type="GeneID" id="93001012"/>
<dbReference type="KEGG" id="cpe:CPE2402"/>
<dbReference type="HOGENOM" id="CLU_036235_2_1_9"/>
<dbReference type="Proteomes" id="UP000000818">
    <property type="component" value="Chromosome"/>
</dbReference>
<dbReference type="GO" id="GO:0015934">
    <property type="term" value="C:large ribosomal subunit"/>
    <property type="evidence" value="ECO:0007669"/>
    <property type="project" value="InterPro"/>
</dbReference>
<dbReference type="GO" id="GO:0019843">
    <property type="term" value="F:rRNA binding"/>
    <property type="evidence" value="ECO:0007669"/>
    <property type="project" value="UniProtKB-UniRule"/>
</dbReference>
<dbReference type="GO" id="GO:0003735">
    <property type="term" value="F:structural constituent of ribosome"/>
    <property type="evidence" value="ECO:0007669"/>
    <property type="project" value="InterPro"/>
</dbReference>
<dbReference type="GO" id="GO:0016740">
    <property type="term" value="F:transferase activity"/>
    <property type="evidence" value="ECO:0007669"/>
    <property type="project" value="InterPro"/>
</dbReference>
<dbReference type="GO" id="GO:0002181">
    <property type="term" value="P:cytoplasmic translation"/>
    <property type="evidence" value="ECO:0007669"/>
    <property type="project" value="TreeGrafter"/>
</dbReference>
<dbReference type="FunFam" id="2.30.30.30:FF:000001">
    <property type="entry name" value="50S ribosomal protein L2"/>
    <property type="match status" value="1"/>
</dbReference>
<dbReference type="FunFam" id="2.40.50.140:FF:000003">
    <property type="entry name" value="50S ribosomal protein L2"/>
    <property type="match status" value="1"/>
</dbReference>
<dbReference type="FunFam" id="4.10.950.10:FF:000001">
    <property type="entry name" value="50S ribosomal protein L2"/>
    <property type="match status" value="1"/>
</dbReference>
<dbReference type="Gene3D" id="2.30.30.30">
    <property type="match status" value="1"/>
</dbReference>
<dbReference type="Gene3D" id="2.40.50.140">
    <property type="entry name" value="Nucleic acid-binding proteins"/>
    <property type="match status" value="1"/>
</dbReference>
<dbReference type="Gene3D" id="4.10.950.10">
    <property type="entry name" value="Ribosomal protein L2, domain 3"/>
    <property type="match status" value="1"/>
</dbReference>
<dbReference type="HAMAP" id="MF_01320_B">
    <property type="entry name" value="Ribosomal_uL2_B"/>
    <property type="match status" value="1"/>
</dbReference>
<dbReference type="InterPro" id="IPR012340">
    <property type="entry name" value="NA-bd_OB-fold"/>
</dbReference>
<dbReference type="InterPro" id="IPR014722">
    <property type="entry name" value="Rib_uL2_dom2"/>
</dbReference>
<dbReference type="InterPro" id="IPR002171">
    <property type="entry name" value="Ribosomal_uL2"/>
</dbReference>
<dbReference type="InterPro" id="IPR005880">
    <property type="entry name" value="Ribosomal_uL2_bac/org-type"/>
</dbReference>
<dbReference type="InterPro" id="IPR022669">
    <property type="entry name" value="Ribosomal_uL2_C"/>
</dbReference>
<dbReference type="InterPro" id="IPR022671">
    <property type="entry name" value="Ribosomal_uL2_CS"/>
</dbReference>
<dbReference type="InterPro" id="IPR014726">
    <property type="entry name" value="Ribosomal_uL2_dom3"/>
</dbReference>
<dbReference type="InterPro" id="IPR022666">
    <property type="entry name" value="Ribosomal_uL2_RNA-bd_dom"/>
</dbReference>
<dbReference type="InterPro" id="IPR008991">
    <property type="entry name" value="Translation_prot_SH3-like_sf"/>
</dbReference>
<dbReference type="NCBIfam" id="TIGR01171">
    <property type="entry name" value="rplB_bact"/>
    <property type="match status" value="1"/>
</dbReference>
<dbReference type="PANTHER" id="PTHR13691:SF5">
    <property type="entry name" value="LARGE RIBOSOMAL SUBUNIT PROTEIN UL2M"/>
    <property type="match status" value="1"/>
</dbReference>
<dbReference type="PANTHER" id="PTHR13691">
    <property type="entry name" value="RIBOSOMAL PROTEIN L2"/>
    <property type="match status" value="1"/>
</dbReference>
<dbReference type="Pfam" id="PF00181">
    <property type="entry name" value="Ribosomal_L2"/>
    <property type="match status" value="1"/>
</dbReference>
<dbReference type="Pfam" id="PF03947">
    <property type="entry name" value="Ribosomal_L2_C"/>
    <property type="match status" value="1"/>
</dbReference>
<dbReference type="PIRSF" id="PIRSF002158">
    <property type="entry name" value="Ribosomal_L2"/>
    <property type="match status" value="1"/>
</dbReference>
<dbReference type="SMART" id="SM01383">
    <property type="entry name" value="Ribosomal_L2"/>
    <property type="match status" value="1"/>
</dbReference>
<dbReference type="SMART" id="SM01382">
    <property type="entry name" value="Ribosomal_L2_C"/>
    <property type="match status" value="1"/>
</dbReference>
<dbReference type="SUPFAM" id="SSF50249">
    <property type="entry name" value="Nucleic acid-binding proteins"/>
    <property type="match status" value="1"/>
</dbReference>
<dbReference type="SUPFAM" id="SSF50104">
    <property type="entry name" value="Translation proteins SH3-like domain"/>
    <property type="match status" value="1"/>
</dbReference>
<dbReference type="PROSITE" id="PS00467">
    <property type="entry name" value="RIBOSOMAL_L2"/>
    <property type="match status" value="1"/>
</dbReference>